<feature type="chain" id="PRO_0000335518" description="Translation initiation factor IF-2">
    <location>
        <begin position="1"/>
        <end position="990"/>
    </location>
</feature>
<feature type="domain" description="tr-type G">
    <location>
        <begin position="490"/>
        <end position="659"/>
    </location>
</feature>
<feature type="region of interest" description="Disordered" evidence="3">
    <location>
        <begin position="92"/>
        <end position="402"/>
    </location>
</feature>
<feature type="region of interest" description="G1" evidence="1">
    <location>
        <begin position="499"/>
        <end position="506"/>
    </location>
</feature>
<feature type="region of interest" description="G2" evidence="1">
    <location>
        <begin position="524"/>
        <end position="528"/>
    </location>
</feature>
<feature type="region of interest" description="G3" evidence="1">
    <location>
        <begin position="545"/>
        <end position="548"/>
    </location>
</feature>
<feature type="region of interest" description="G4" evidence="1">
    <location>
        <begin position="599"/>
        <end position="602"/>
    </location>
</feature>
<feature type="region of interest" description="G5" evidence="1">
    <location>
        <begin position="635"/>
        <end position="637"/>
    </location>
</feature>
<feature type="compositionally biased region" description="Low complexity" evidence="3">
    <location>
        <begin position="104"/>
        <end position="116"/>
    </location>
</feature>
<feature type="compositionally biased region" description="Low complexity" evidence="3">
    <location>
        <begin position="131"/>
        <end position="151"/>
    </location>
</feature>
<feature type="compositionally biased region" description="Basic and acidic residues" evidence="3">
    <location>
        <begin position="158"/>
        <end position="201"/>
    </location>
</feature>
<feature type="compositionally biased region" description="Low complexity" evidence="3">
    <location>
        <begin position="223"/>
        <end position="243"/>
    </location>
</feature>
<feature type="compositionally biased region" description="Basic and acidic residues" evidence="3">
    <location>
        <begin position="244"/>
        <end position="264"/>
    </location>
</feature>
<feature type="compositionally biased region" description="Low complexity" evidence="3">
    <location>
        <begin position="281"/>
        <end position="290"/>
    </location>
</feature>
<feature type="compositionally biased region" description="Low complexity" evidence="3">
    <location>
        <begin position="318"/>
        <end position="342"/>
    </location>
</feature>
<feature type="compositionally biased region" description="Basic and acidic residues" evidence="3">
    <location>
        <begin position="358"/>
        <end position="368"/>
    </location>
</feature>
<feature type="compositionally biased region" description="Basic and acidic residues" evidence="3">
    <location>
        <begin position="386"/>
        <end position="398"/>
    </location>
</feature>
<feature type="binding site" evidence="2">
    <location>
        <begin position="499"/>
        <end position="506"/>
    </location>
    <ligand>
        <name>GTP</name>
        <dbReference type="ChEBI" id="CHEBI:37565"/>
    </ligand>
</feature>
<feature type="binding site" evidence="2">
    <location>
        <begin position="545"/>
        <end position="549"/>
    </location>
    <ligand>
        <name>GTP</name>
        <dbReference type="ChEBI" id="CHEBI:37565"/>
    </ligand>
</feature>
<feature type="binding site" evidence="2">
    <location>
        <begin position="599"/>
        <end position="602"/>
    </location>
    <ligand>
        <name>GTP</name>
        <dbReference type="ChEBI" id="CHEBI:37565"/>
    </ligand>
</feature>
<evidence type="ECO:0000250" key="1"/>
<evidence type="ECO:0000255" key="2">
    <source>
        <dbReference type="HAMAP-Rule" id="MF_00100"/>
    </source>
</evidence>
<evidence type="ECO:0000256" key="3">
    <source>
        <dbReference type="SAM" id="MobiDB-lite"/>
    </source>
</evidence>
<dbReference type="EMBL" id="CP000542">
    <property type="protein sequence ID" value="ABM58490.1"/>
    <property type="molecule type" value="Genomic_DNA"/>
</dbReference>
<dbReference type="RefSeq" id="WP_011810488.1">
    <property type="nucleotide sequence ID" value="NC_008786.1"/>
</dbReference>
<dbReference type="SMR" id="A1WLI3"/>
<dbReference type="STRING" id="391735.Veis_2749"/>
<dbReference type="GeneID" id="76461254"/>
<dbReference type="KEGG" id="vei:Veis_2749"/>
<dbReference type="eggNOG" id="COG0532">
    <property type="taxonomic scope" value="Bacteria"/>
</dbReference>
<dbReference type="HOGENOM" id="CLU_006301_6_0_4"/>
<dbReference type="OrthoDB" id="9811804at2"/>
<dbReference type="Proteomes" id="UP000000374">
    <property type="component" value="Chromosome"/>
</dbReference>
<dbReference type="GO" id="GO:0005829">
    <property type="term" value="C:cytosol"/>
    <property type="evidence" value="ECO:0007669"/>
    <property type="project" value="TreeGrafter"/>
</dbReference>
<dbReference type="GO" id="GO:0005525">
    <property type="term" value="F:GTP binding"/>
    <property type="evidence" value="ECO:0007669"/>
    <property type="project" value="UniProtKB-KW"/>
</dbReference>
<dbReference type="GO" id="GO:0003924">
    <property type="term" value="F:GTPase activity"/>
    <property type="evidence" value="ECO:0007669"/>
    <property type="project" value="UniProtKB-UniRule"/>
</dbReference>
<dbReference type="GO" id="GO:0003743">
    <property type="term" value="F:translation initiation factor activity"/>
    <property type="evidence" value="ECO:0007669"/>
    <property type="project" value="UniProtKB-UniRule"/>
</dbReference>
<dbReference type="CDD" id="cd01887">
    <property type="entry name" value="IF2_eIF5B"/>
    <property type="match status" value="1"/>
</dbReference>
<dbReference type="CDD" id="cd03702">
    <property type="entry name" value="IF2_mtIF2_II"/>
    <property type="match status" value="1"/>
</dbReference>
<dbReference type="CDD" id="cd03692">
    <property type="entry name" value="mtIF2_IVc"/>
    <property type="match status" value="1"/>
</dbReference>
<dbReference type="FunFam" id="2.40.30.10:FF:000007">
    <property type="entry name" value="Translation initiation factor IF-2"/>
    <property type="match status" value="1"/>
</dbReference>
<dbReference type="FunFam" id="2.40.30.10:FF:000008">
    <property type="entry name" value="Translation initiation factor IF-2"/>
    <property type="match status" value="1"/>
</dbReference>
<dbReference type="FunFam" id="3.40.50.10050:FF:000001">
    <property type="entry name" value="Translation initiation factor IF-2"/>
    <property type="match status" value="1"/>
</dbReference>
<dbReference type="FunFam" id="3.40.50.300:FF:000019">
    <property type="entry name" value="Translation initiation factor IF-2"/>
    <property type="match status" value="1"/>
</dbReference>
<dbReference type="Gene3D" id="3.40.50.300">
    <property type="entry name" value="P-loop containing nucleotide triphosphate hydrolases"/>
    <property type="match status" value="1"/>
</dbReference>
<dbReference type="Gene3D" id="3.30.56.50">
    <property type="entry name" value="Putative DNA-binding domain, N-terminal subdomain of bacterial translation initiation factor IF2"/>
    <property type="match status" value="1"/>
</dbReference>
<dbReference type="Gene3D" id="2.40.30.10">
    <property type="entry name" value="Translation factors"/>
    <property type="match status" value="2"/>
</dbReference>
<dbReference type="Gene3D" id="3.40.50.10050">
    <property type="entry name" value="Translation initiation factor IF- 2, domain 3"/>
    <property type="match status" value="1"/>
</dbReference>
<dbReference type="HAMAP" id="MF_00100_B">
    <property type="entry name" value="IF_2_B"/>
    <property type="match status" value="1"/>
</dbReference>
<dbReference type="InterPro" id="IPR009061">
    <property type="entry name" value="DNA-bd_dom_put_sf"/>
</dbReference>
<dbReference type="InterPro" id="IPR053905">
    <property type="entry name" value="EF-G-like_DII"/>
</dbReference>
<dbReference type="InterPro" id="IPR013575">
    <property type="entry name" value="IF2_assoc_dom_bac"/>
</dbReference>
<dbReference type="InterPro" id="IPR044145">
    <property type="entry name" value="IF2_II"/>
</dbReference>
<dbReference type="InterPro" id="IPR006847">
    <property type="entry name" value="IF2_N"/>
</dbReference>
<dbReference type="InterPro" id="IPR027417">
    <property type="entry name" value="P-loop_NTPase"/>
</dbReference>
<dbReference type="InterPro" id="IPR005225">
    <property type="entry name" value="Small_GTP-bd"/>
</dbReference>
<dbReference type="InterPro" id="IPR000795">
    <property type="entry name" value="T_Tr_GTP-bd_dom"/>
</dbReference>
<dbReference type="InterPro" id="IPR000178">
    <property type="entry name" value="TF_IF2_bacterial-like"/>
</dbReference>
<dbReference type="InterPro" id="IPR015760">
    <property type="entry name" value="TIF_IF2"/>
</dbReference>
<dbReference type="InterPro" id="IPR023115">
    <property type="entry name" value="TIF_IF2_dom3"/>
</dbReference>
<dbReference type="InterPro" id="IPR036925">
    <property type="entry name" value="TIF_IF2_dom3_sf"/>
</dbReference>
<dbReference type="InterPro" id="IPR009000">
    <property type="entry name" value="Transl_B-barrel_sf"/>
</dbReference>
<dbReference type="NCBIfam" id="TIGR00487">
    <property type="entry name" value="IF-2"/>
    <property type="match status" value="1"/>
</dbReference>
<dbReference type="NCBIfam" id="TIGR00231">
    <property type="entry name" value="small_GTP"/>
    <property type="match status" value="1"/>
</dbReference>
<dbReference type="PANTHER" id="PTHR43381:SF5">
    <property type="entry name" value="TR-TYPE G DOMAIN-CONTAINING PROTEIN"/>
    <property type="match status" value="1"/>
</dbReference>
<dbReference type="PANTHER" id="PTHR43381">
    <property type="entry name" value="TRANSLATION INITIATION FACTOR IF-2-RELATED"/>
    <property type="match status" value="1"/>
</dbReference>
<dbReference type="Pfam" id="PF22042">
    <property type="entry name" value="EF-G_D2"/>
    <property type="match status" value="1"/>
</dbReference>
<dbReference type="Pfam" id="PF00009">
    <property type="entry name" value="GTP_EFTU"/>
    <property type="match status" value="1"/>
</dbReference>
<dbReference type="Pfam" id="PF11987">
    <property type="entry name" value="IF-2"/>
    <property type="match status" value="1"/>
</dbReference>
<dbReference type="Pfam" id="PF08364">
    <property type="entry name" value="IF2_assoc"/>
    <property type="match status" value="1"/>
</dbReference>
<dbReference type="Pfam" id="PF04760">
    <property type="entry name" value="IF2_N"/>
    <property type="match status" value="2"/>
</dbReference>
<dbReference type="SUPFAM" id="SSF52156">
    <property type="entry name" value="Initiation factor IF2/eIF5b, domain 3"/>
    <property type="match status" value="1"/>
</dbReference>
<dbReference type="SUPFAM" id="SSF52540">
    <property type="entry name" value="P-loop containing nucleoside triphosphate hydrolases"/>
    <property type="match status" value="1"/>
</dbReference>
<dbReference type="SUPFAM" id="SSF46955">
    <property type="entry name" value="Putative DNA-binding domain"/>
    <property type="match status" value="1"/>
</dbReference>
<dbReference type="SUPFAM" id="SSF50447">
    <property type="entry name" value="Translation proteins"/>
    <property type="match status" value="2"/>
</dbReference>
<dbReference type="PROSITE" id="PS51722">
    <property type="entry name" value="G_TR_2"/>
    <property type="match status" value="1"/>
</dbReference>
<keyword id="KW-0963">Cytoplasm</keyword>
<keyword id="KW-0342">GTP-binding</keyword>
<keyword id="KW-0396">Initiation factor</keyword>
<keyword id="KW-0547">Nucleotide-binding</keyword>
<keyword id="KW-0648">Protein biosynthesis</keyword>
<keyword id="KW-1185">Reference proteome</keyword>
<proteinExistence type="inferred from homology"/>
<accession>A1WLI3</accession>
<protein>
    <recommendedName>
        <fullName evidence="2">Translation initiation factor IF-2</fullName>
    </recommendedName>
</protein>
<gene>
    <name evidence="2" type="primary">infB</name>
    <name type="ordered locus">Veis_2749</name>
</gene>
<reference key="1">
    <citation type="submission" date="2006-12" db="EMBL/GenBank/DDBJ databases">
        <title>Complete sequence of chromosome 1 of Verminephrobacter eiseniae EF01-2.</title>
        <authorList>
            <person name="Copeland A."/>
            <person name="Lucas S."/>
            <person name="Lapidus A."/>
            <person name="Barry K."/>
            <person name="Detter J.C."/>
            <person name="Glavina del Rio T."/>
            <person name="Dalin E."/>
            <person name="Tice H."/>
            <person name="Pitluck S."/>
            <person name="Chertkov O."/>
            <person name="Brettin T."/>
            <person name="Bruce D."/>
            <person name="Han C."/>
            <person name="Tapia R."/>
            <person name="Gilna P."/>
            <person name="Schmutz J."/>
            <person name="Larimer F."/>
            <person name="Land M."/>
            <person name="Hauser L."/>
            <person name="Kyrpides N."/>
            <person name="Kim E."/>
            <person name="Stahl D."/>
            <person name="Richardson P."/>
        </authorList>
    </citation>
    <scope>NUCLEOTIDE SEQUENCE [LARGE SCALE GENOMIC DNA]</scope>
    <source>
        <strain>EF01-2</strain>
    </source>
</reference>
<organism>
    <name type="scientific">Verminephrobacter eiseniae (strain EF01-2)</name>
    <dbReference type="NCBI Taxonomy" id="391735"/>
    <lineage>
        <taxon>Bacteria</taxon>
        <taxon>Pseudomonadati</taxon>
        <taxon>Pseudomonadota</taxon>
        <taxon>Betaproteobacteria</taxon>
        <taxon>Burkholderiales</taxon>
        <taxon>Comamonadaceae</taxon>
        <taxon>Verminephrobacter</taxon>
    </lineage>
</organism>
<comment type="function">
    <text evidence="2">One of the essential components for the initiation of protein synthesis. Protects formylmethionyl-tRNA from spontaneous hydrolysis and promotes its binding to the 30S ribosomal subunits. Also involved in the hydrolysis of GTP during the formation of the 70S ribosomal complex.</text>
</comment>
<comment type="subcellular location">
    <subcellularLocation>
        <location evidence="2">Cytoplasm</location>
    </subcellularLocation>
</comment>
<comment type="similarity">
    <text evidence="2">Belongs to the TRAFAC class translation factor GTPase superfamily. Classic translation factor GTPase family. IF-2 subfamily.</text>
</comment>
<sequence>MSSNTVAEFATELKKSPATLLDQLKAAGVGKAALSDALTESDKQRLLAYLQASHGTTSVDRKKITLVKKSTSEIKQADATGKARTIQVEVRKKRTFVKRDDAQEGAADGAGSAAFAEPEHPAPAAQHDVPEAPAEQAQADAAPAADGAAPALSSEDQELARREEQARHQAELIRRQEAELAAKRAAREAREKREREAEERAAAYAAQEAEKKAAASAVKQVATREQAAEATARNAAQLQARAKAAAESKARSDEEAARAADLDARRRKAEAEAAAIRSMLATPKKAVMVAKKPEPPPKPVPKPAAAAGDAKKGTLHKPAVGATRTAAGAARAGAAAGAPGAGKEVKSAKLSSSWAGDPAKKKEIKTRGDSSGGVGRNNWRGGPRGRRGDSRDQRDEHLQAAPAETRIIEVHVPETITVAEVAHKMSIKASEVIKALMKMGQMVTINQPLDQDTAMIVVEELGHKAVVAALDDPEAFADDDVAQQSIEVLPRAPVVTVMGHVDHGKTSLLDYIRRAKVAASEAGGITQHIGAYHVQTPRGMVSFLDTPGHEAFTAMRARGAQATDIVILVVAADDGVMPQTREAIKHAKAAGVPIVVAITKADKPDANLDRVKQELIGEQVVPEDYGGDSPFVAVSSKTGQGIDALLEHVLLQADVMELKAPVDALAKGLVIEAQLDKGRGPVATVLVQSGTLKVGDVVLAGQTFGRVRAMLDENGRPAKTAGPSIPVEIQGLTEVPQAGDEFMVLTDERRAREIATYRAGRFRNTKLAKQQAAKLEHVFADMTAGEVKMLPIIVKADVQGSQEALAQSLLKLSTDEVKVQLVYAAVGAISESDINLAIASKAVVIGFNVRADAGARKLAEGNGVALHYYSIIYDAVDELRVAMSGMLAPEQREEIIGTAEIRTVFTASKIGTVAGSYITSGMVHRNARFRLLRANVVVHTGEVDSIKRLKDDVREVKEGFECGIKLKNYSDILEGDQLEFFDIKQIARTL</sequence>
<name>IF2_VEREI</name>